<dbReference type="EC" id="2.1.1.-" evidence="2"/>
<dbReference type="EMBL" id="CM001235">
    <property type="protein sequence ID" value="EHA48592.1"/>
    <property type="molecule type" value="Genomic_DNA"/>
</dbReference>
<dbReference type="RefSeq" id="XP_003718176.1">
    <property type="nucleotide sequence ID" value="XM_003718128.1"/>
</dbReference>
<dbReference type="EnsemblFungi" id="MGG_14657T0">
    <property type="protein sequence ID" value="MGG_14657T0"/>
    <property type="gene ID" value="MGG_14657"/>
</dbReference>
<dbReference type="GeneID" id="5050752"/>
<dbReference type="KEGG" id="mgr:MGG_14657"/>
<dbReference type="VEuPathDB" id="FungiDB:MGG_14657"/>
<dbReference type="eggNOG" id="ENOG502SJSY">
    <property type="taxonomic scope" value="Eukaryota"/>
</dbReference>
<dbReference type="HOGENOM" id="CLU_046029_0_0_1"/>
<dbReference type="InParanoid" id="G4NEA9"/>
<dbReference type="OMA" id="VWRCPLP"/>
<dbReference type="OrthoDB" id="10061782at2759"/>
<dbReference type="Proteomes" id="UP000009058">
    <property type="component" value="Chromosome 5"/>
</dbReference>
<dbReference type="GO" id="GO:0008168">
    <property type="term" value="F:methyltransferase activity"/>
    <property type="evidence" value="ECO:0007669"/>
    <property type="project" value="UniProtKB-KW"/>
</dbReference>
<dbReference type="GO" id="GO:0032259">
    <property type="term" value="P:methylation"/>
    <property type="evidence" value="ECO:0007669"/>
    <property type="project" value="UniProtKB-KW"/>
</dbReference>
<dbReference type="Gene3D" id="3.40.50.150">
    <property type="entry name" value="Vaccinia Virus protein VP39"/>
    <property type="match status" value="1"/>
</dbReference>
<dbReference type="InterPro" id="IPR029063">
    <property type="entry name" value="SAM-dependent_MTases_sf"/>
</dbReference>
<dbReference type="SUPFAM" id="SSF53335">
    <property type="entry name" value="S-adenosyl-L-methionine-dependent methyltransferases"/>
    <property type="match status" value="1"/>
</dbReference>
<protein>
    <recommendedName>
        <fullName evidence="3">O-methyltransferase NEC2</fullName>
        <ecNumber evidence="2">2.1.1.-</ecNumber>
    </recommendedName>
    <alternativeName>
        <fullName evidence="3">Nectriapyrone biosynthesis cluster protein 2</fullName>
    </alternativeName>
</protein>
<comment type="function">
    <text evidence="2">O-methyltransferase; part of the gene cluster that mediates the biosynthesis of nectriapyrone and its analogs phomopyrone A, acropyrone and zaepyrone (PubMed:30443971). The nectriapyrone biosynthetic gene cluster consists of two genes, the highly reducing polyketide synthase NEC1 that produces a demethylated analog of nectriapyrone from one unit of acetyl-CoA and one unit of malonyl-CoA; and the O-methyltransferase NEC2 that further methylates the NEC1 product to yield nectriapyrone (PubMed:30443971). Nectriapyrone is further hydrolyzed to nectriapyrone D, also known as gulypyrone B, by an unidentified hydrolase localized outside the nectriapyrone cluster (PubMed:30443971).</text>
</comment>
<comment type="catalytic activity">
    <reaction evidence="2">
        <text>desmethylnectriapyrone + S-adenosyl-L-methionine = nectriapyrone + S-adenosyl-L-homocysteine + H(+)</text>
        <dbReference type="Rhea" id="RHEA:58748"/>
        <dbReference type="ChEBI" id="CHEBI:15378"/>
        <dbReference type="ChEBI" id="CHEBI:57856"/>
        <dbReference type="ChEBI" id="CHEBI:59789"/>
        <dbReference type="ChEBI" id="CHEBI:142639"/>
        <dbReference type="ChEBI" id="CHEBI:142640"/>
    </reaction>
    <physiologicalReaction direction="left-to-right" evidence="2">
        <dbReference type="Rhea" id="RHEA:58749"/>
    </physiologicalReaction>
</comment>
<comment type="disruption phenotype">
    <text evidence="2">Completely abolishes the production of nectriapyrones but accumulates a demethylated analog of nectriapyrone.</text>
</comment>
<comment type="similarity">
    <text evidence="1">Belongs to the methyltransferase superfamily.</text>
</comment>
<organism>
    <name type="scientific">Pyricularia oryzae (strain 70-15 / ATCC MYA-4617 / FGSC 8958)</name>
    <name type="common">Rice blast fungus</name>
    <name type="synonym">Magnaporthe oryzae</name>
    <dbReference type="NCBI Taxonomy" id="242507"/>
    <lineage>
        <taxon>Eukaryota</taxon>
        <taxon>Fungi</taxon>
        <taxon>Dikarya</taxon>
        <taxon>Ascomycota</taxon>
        <taxon>Pezizomycotina</taxon>
        <taxon>Sordariomycetes</taxon>
        <taxon>Sordariomycetidae</taxon>
        <taxon>Magnaporthales</taxon>
        <taxon>Pyriculariaceae</taxon>
        <taxon>Pyricularia</taxon>
    </lineage>
</organism>
<reference key="1">
    <citation type="journal article" date="2005" name="Nature">
        <title>The genome sequence of the rice blast fungus Magnaporthe grisea.</title>
        <authorList>
            <person name="Dean R.A."/>
            <person name="Talbot N.J."/>
            <person name="Ebbole D.J."/>
            <person name="Farman M.L."/>
            <person name="Mitchell T.K."/>
            <person name="Orbach M.J."/>
            <person name="Thon M.R."/>
            <person name="Kulkarni R."/>
            <person name="Xu J.-R."/>
            <person name="Pan H."/>
            <person name="Read N.D."/>
            <person name="Lee Y.-H."/>
            <person name="Carbone I."/>
            <person name="Brown D."/>
            <person name="Oh Y.Y."/>
            <person name="Donofrio N."/>
            <person name="Jeong J.S."/>
            <person name="Soanes D.M."/>
            <person name="Djonovic S."/>
            <person name="Kolomiets E."/>
            <person name="Rehmeyer C."/>
            <person name="Li W."/>
            <person name="Harding M."/>
            <person name="Kim S."/>
            <person name="Lebrun M.-H."/>
            <person name="Bohnert H."/>
            <person name="Coughlan S."/>
            <person name="Butler J."/>
            <person name="Calvo S.E."/>
            <person name="Ma L.-J."/>
            <person name="Nicol R."/>
            <person name="Purcell S."/>
            <person name="Nusbaum C."/>
            <person name="Galagan J.E."/>
            <person name="Birren B.W."/>
        </authorList>
    </citation>
    <scope>NUCLEOTIDE SEQUENCE [LARGE SCALE GENOMIC DNA]</scope>
    <source>
        <strain>70-15 / ATCC MYA-4617 / FGSC 8958</strain>
    </source>
</reference>
<reference key="2">
    <citation type="journal article" date="2019" name="ChemBioChem">
        <title>Induction of nectriapyrone biosynthesis in the rice blast fungus Pyricularia oryzae by disturbance of the two-component signal transduction system.</title>
        <authorList>
            <person name="Motoyama T."/>
            <person name="Nogawa T."/>
            <person name="Hayashi T."/>
            <person name="Hirota H."/>
            <person name="Osada H."/>
        </authorList>
    </citation>
    <scope>IDENTIFICATION</scope>
    <scope>INDUCTION</scope>
    <scope>DISRUPTION PHENOTYPE</scope>
    <scope>FUNCTION</scope>
    <scope>CATALYTIC ACTIVITY</scope>
</reference>
<sequence>MASSRDRAYVTVYSPTLLTWVYDYYVLGFNLRYIWGCPTDAVLLPFFAENFSRRHLDVGVATGYLPARVLASPWRRAAAHRQHLTLLDINANSLRASDARVRAAAPGIETTCVEADVVADLPPVLASVVEEERARVEKAGGEAGSSSRSCLYDSISMFNLFHCVPGGPAKLRAISTYKALLADHGVLSGCTVLGERHATGWFSRWYLRLYNRKGIFNNINDTREEFEEVLNKEFEEVDTWMFGMVLLFRASKPRREGSGYVDLLA</sequence>
<feature type="chain" id="PRO_0000446266" description="O-methyltransferase NEC2">
    <location>
        <begin position="1"/>
        <end position="265"/>
    </location>
</feature>
<name>NEC2_PYRO7</name>
<proteinExistence type="evidence at protein level"/>
<keyword id="KW-0489">Methyltransferase</keyword>
<keyword id="KW-1185">Reference proteome</keyword>
<keyword id="KW-0808">Transferase</keyword>
<accession>G4NEA9</accession>
<gene>
    <name evidence="3" type="primary">NEC2</name>
    <name type="ORF">MGG_14657</name>
</gene>
<evidence type="ECO:0000255" key="1"/>
<evidence type="ECO:0000269" key="2">
    <source>
    </source>
</evidence>
<evidence type="ECO:0000303" key="3">
    <source>
    </source>
</evidence>